<dbReference type="EMBL" id="AE008917">
    <property type="protein sequence ID" value="AAL53229.1"/>
    <property type="molecule type" value="Genomic_DNA"/>
</dbReference>
<dbReference type="PIR" id="AB3508">
    <property type="entry name" value="AB3508"/>
</dbReference>
<dbReference type="RefSeq" id="WP_004684541.1">
    <property type="nucleotide sequence ID" value="NZ_GG703778.1"/>
</dbReference>
<dbReference type="SMR" id="Q8YE30"/>
<dbReference type="GeneID" id="29594942"/>
<dbReference type="KEGG" id="bme:BMEI2048"/>
<dbReference type="KEGG" id="bmel:DK63_1446"/>
<dbReference type="PATRIC" id="fig|224914.52.peg.1523"/>
<dbReference type="eggNOG" id="COG1220">
    <property type="taxonomic scope" value="Bacteria"/>
</dbReference>
<dbReference type="PhylomeDB" id="Q8YE30"/>
<dbReference type="Proteomes" id="UP000000419">
    <property type="component" value="Chromosome I"/>
</dbReference>
<dbReference type="GO" id="GO:0009376">
    <property type="term" value="C:HslUV protease complex"/>
    <property type="evidence" value="ECO:0007669"/>
    <property type="project" value="UniProtKB-UniRule"/>
</dbReference>
<dbReference type="GO" id="GO:0005524">
    <property type="term" value="F:ATP binding"/>
    <property type="evidence" value="ECO:0007669"/>
    <property type="project" value="UniProtKB-UniRule"/>
</dbReference>
<dbReference type="GO" id="GO:0016887">
    <property type="term" value="F:ATP hydrolysis activity"/>
    <property type="evidence" value="ECO:0007669"/>
    <property type="project" value="InterPro"/>
</dbReference>
<dbReference type="GO" id="GO:0008233">
    <property type="term" value="F:peptidase activity"/>
    <property type="evidence" value="ECO:0007669"/>
    <property type="project" value="InterPro"/>
</dbReference>
<dbReference type="GO" id="GO:0036402">
    <property type="term" value="F:proteasome-activating activity"/>
    <property type="evidence" value="ECO:0007669"/>
    <property type="project" value="UniProtKB-UniRule"/>
</dbReference>
<dbReference type="GO" id="GO:0043335">
    <property type="term" value="P:protein unfolding"/>
    <property type="evidence" value="ECO:0007669"/>
    <property type="project" value="UniProtKB-UniRule"/>
</dbReference>
<dbReference type="GO" id="GO:0051603">
    <property type="term" value="P:proteolysis involved in protein catabolic process"/>
    <property type="evidence" value="ECO:0007669"/>
    <property type="project" value="TreeGrafter"/>
</dbReference>
<dbReference type="CDD" id="cd19498">
    <property type="entry name" value="RecA-like_HslU"/>
    <property type="match status" value="1"/>
</dbReference>
<dbReference type="FunFam" id="3.40.50.300:FF:000213">
    <property type="entry name" value="ATP-dependent protease ATPase subunit HslU"/>
    <property type="match status" value="1"/>
</dbReference>
<dbReference type="FunFam" id="3.40.50.300:FF:000220">
    <property type="entry name" value="ATP-dependent protease ATPase subunit HslU"/>
    <property type="match status" value="1"/>
</dbReference>
<dbReference type="Gene3D" id="1.10.8.60">
    <property type="match status" value="1"/>
</dbReference>
<dbReference type="Gene3D" id="1.10.8.10">
    <property type="entry name" value="DNA helicase RuvA subunit, C-terminal domain"/>
    <property type="match status" value="1"/>
</dbReference>
<dbReference type="Gene3D" id="3.40.50.300">
    <property type="entry name" value="P-loop containing nucleotide triphosphate hydrolases"/>
    <property type="match status" value="1"/>
</dbReference>
<dbReference type="HAMAP" id="MF_00249">
    <property type="entry name" value="HslU"/>
    <property type="match status" value="1"/>
</dbReference>
<dbReference type="InterPro" id="IPR003593">
    <property type="entry name" value="AAA+_ATPase"/>
</dbReference>
<dbReference type="InterPro" id="IPR050052">
    <property type="entry name" value="ATP-dep_Clp_protease_ClpX"/>
</dbReference>
<dbReference type="InterPro" id="IPR003959">
    <property type="entry name" value="ATPase_AAA_core"/>
</dbReference>
<dbReference type="InterPro" id="IPR019489">
    <property type="entry name" value="Clp_ATPase_C"/>
</dbReference>
<dbReference type="InterPro" id="IPR004491">
    <property type="entry name" value="HslU"/>
</dbReference>
<dbReference type="InterPro" id="IPR027417">
    <property type="entry name" value="P-loop_NTPase"/>
</dbReference>
<dbReference type="NCBIfam" id="TIGR00390">
    <property type="entry name" value="hslU"/>
    <property type="match status" value="1"/>
</dbReference>
<dbReference type="NCBIfam" id="NF003544">
    <property type="entry name" value="PRK05201.1"/>
    <property type="match status" value="1"/>
</dbReference>
<dbReference type="PANTHER" id="PTHR48102">
    <property type="entry name" value="ATP-DEPENDENT CLP PROTEASE ATP-BINDING SUBUNIT CLPX-LIKE, MITOCHONDRIAL-RELATED"/>
    <property type="match status" value="1"/>
</dbReference>
<dbReference type="PANTHER" id="PTHR48102:SF3">
    <property type="entry name" value="ATP-DEPENDENT PROTEASE ATPASE SUBUNIT HSLU"/>
    <property type="match status" value="1"/>
</dbReference>
<dbReference type="Pfam" id="PF00004">
    <property type="entry name" value="AAA"/>
    <property type="match status" value="1"/>
</dbReference>
<dbReference type="Pfam" id="PF07724">
    <property type="entry name" value="AAA_2"/>
    <property type="match status" value="1"/>
</dbReference>
<dbReference type="SMART" id="SM00382">
    <property type="entry name" value="AAA"/>
    <property type="match status" value="1"/>
</dbReference>
<dbReference type="SMART" id="SM01086">
    <property type="entry name" value="ClpB_D2-small"/>
    <property type="match status" value="1"/>
</dbReference>
<dbReference type="SUPFAM" id="SSF52540">
    <property type="entry name" value="P-loop containing nucleoside triphosphate hydrolases"/>
    <property type="match status" value="1"/>
</dbReference>
<comment type="function">
    <text evidence="1">ATPase subunit of a proteasome-like degradation complex; this subunit has chaperone activity. The binding of ATP and its subsequent hydrolysis by HslU are essential for unfolding of protein substrates subsequently hydrolyzed by HslV. HslU recognizes the N-terminal part of its protein substrates and unfolds these before they are guided to HslV for hydrolysis.</text>
</comment>
<comment type="subunit">
    <text evidence="1">A double ring-shaped homohexamer of HslV is capped on each side by a ring-shaped HslU homohexamer. The assembly of the HslU/HslV complex is dependent on binding of ATP.</text>
</comment>
<comment type="subcellular location">
    <subcellularLocation>
        <location evidence="1">Cytoplasm</location>
    </subcellularLocation>
</comment>
<comment type="similarity">
    <text evidence="1">Belongs to the ClpX chaperone family. HslU subfamily.</text>
</comment>
<accession>Q8YE30</accession>
<gene>
    <name evidence="1" type="primary">hslU</name>
    <name type="ordered locus">BMEI2048</name>
</gene>
<protein>
    <recommendedName>
        <fullName evidence="1">ATP-dependent protease ATPase subunit HslU</fullName>
    </recommendedName>
    <alternativeName>
        <fullName evidence="1">Unfoldase HslU</fullName>
    </alternativeName>
</protein>
<reference key="1">
    <citation type="journal article" date="2002" name="Proc. Natl. Acad. Sci. U.S.A.">
        <title>The genome sequence of the facultative intracellular pathogen Brucella melitensis.</title>
        <authorList>
            <person name="DelVecchio V.G."/>
            <person name="Kapatral V."/>
            <person name="Redkar R.J."/>
            <person name="Patra G."/>
            <person name="Mujer C."/>
            <person name="Los T."/>
            <person name="Ivanova N."/>
            <person name="Anderson I."/>
            <person name="Bhattacharyya A."/>
            <person name="Lykidis A."/>
            <person name="Reznik G."/>
            <person name="Jablonski L."/>
            <person name="Larsen N."/>
            <person name="D'Souza M."/>
            <person name="Bernal A."/>
            <person name="Mazur M."/>
            <person name="Goltsman E."/>
            <person name="Selkov E."/>
            <person name="Elzer P.H."/>
            <person name="Hagius S."/>
            <person name="O'Callaghan D."/>
            <person name="Letesson J.-J."/>
            <person name="Haselkorn R."/>
            <person name="Kyrpides N.C."/>
            <person name="Overbeek R."/>
        </authorList>
    </citation>
    <scope>NUCLEOTIDE SEQUENCE [LARGE SCALE GENOMIC DNA]</scope>
    <source>
        <strain>ATCC 23456 / CCUG 17765 / NCTC 10094 / 16M</strain>
    </source>
</reference>
<sequence>MSNFSPREIVSELDRFIIGQKDAKRAVAIALRNRWRRQQLEGQMREEVMPKNILMIGPTGVGKTEISRRLAKLAGAPFVKVEATKFTEVGYVGRDVEQIIRDLVEIAITLVREKRREDVKAKAHLNAEERVLDALVGKTASPVTRDSFRKKLRNGEMDDKEIEIEVSDSGASPNFEIPGMPGANIGVLNISDMLGKAMGGRTKTRKTTVKDSYPILINDESDKLLDQDQIVQEALRVSEDEGIVFIDEIDKIAAREGGSGAGVSREGVQRDLLPLVEGTTVATKYGPVKTDHILFITSGAFHVSKPSDLLPELQGRLPIRVELSALTREDFRRILTETEASLIKQYIALMETEEVKLEFSDDAIDALADIAVDLNATVENIGARRLQTVMEKVLDEISFTAPDKAGATFIIDAAYVKEKIGGLAKNTDLSRFIL</sequence>
<feature type="chain" id="PRO_0000160484" description="ATP-dependent protease ATPase subunit HslU">
    <location>
        <begin position="1"/>
        <end position="434"/>
    </location>
</feature>
<feature type="binding site" evidence="1">
    <location>
        <position position="18"/>
    </location>
    <ligand>
        <name>ATP</name>
        <dbReference type="ChEBI" id="CHEBI:30616"/>
    </ligand>
</feature>
<feature type="binding site" evidence="1">
    <location>
        <begin position="60"/>
        <end position="65"/>
    </location>
    <ligand>
        <name>ATP</name>
        <dbReference type="ChEBI" id="CHEBI:30616"/>
    </ligand>
</feature>
<feature type="binding site" evidence="1">
    <location>
        <position position="247"/>
    </location>
    <ligand>
        <name>ATP</name>
        <dbReference type="ChEBI" id="CHEBI:30616"/>
    </ligand>
</feature>
<feature type="binding site" evidence="1">
    <location>
        <position position="312"/>
    </location>
    <ligand>
        <name>ATP</name>
        <dbReference type="ChEBI" id="CHEBI:30616"/>
    </ligand>
</feature>
<feature type="binding site" evidence="1">
    <location>
        <position position="384"/>
    </location>
    <ligand>
        <name>ATP</name>
        <dbReference type="ChEBI" id="CHEBI:30616"/>
    </ligand>
</feature>
<name>HSLU_BRUME</name>
<keyword id="KW-0067">ATP-binding</keyword>
<keyword id="KW-0143">Chaperone</keyword>
<keyword id="KW-0963">Cytoplasm</keyword>
<keyword id="KW-0547">Nucleotide-binding</keyword>
<evidence type="ECO:0000255" key="1">
    <source>
        <dbReference type="HAMAP-Rule" id="MF_00249"/>
    </source>
</evidence>
<organism>
    <name type="scientific">Brucella melitensis biotype 1 (strain ATCC 23456 / CCUG 17765 / NCTC 10094 / 16M)</name>
    <dbReference type="NCBI Taxonomy" id="224914"/>
    <lineage>
        <taxon>Bacteria</taxon>
        <taxon>Pseudomonadati</taxon>
        <taxon>Pseudomonadota</taxon>
        <taxon>Alphaproteobacteria</taxon>
        <taxon>Hyphomicrobiales</taxon>
        <taxon>Brucellaceae</taxon>
        <taxon>Brucella/Ochrobactrum group</taxon>
        <taxon>Brucella</taxon>
    </lineage>
</organism>
<proteinExistence type="inferred from homology"/>